<keyword id="KW-0997">Cell inner membrane</keyword>
<keyword id="KW-1003">Cell membrane</keyword>
<keyword id="KW-0472">Membrane</keyword>
<keyword id="KW-0812">Transmembrane</keyword>
<keyword id="KW-1133">Transmembrane helix</keyword>
<keyword id="KW-0813">Transport</keyword>
<reference key="1">
    <citation type="submission" date="2007-02" db="EMBL/GenBank/DDBJ databases">
        <title>Complete sequence of chromosome of Yersinia pestis Pestoides F.</title>
        <authorList>
            <consortium name="US DOE Joint Genome Institute"/>
            <person name="Copeland A."/>
            <person name="Lucas S."/>
            <person name="Lapidus A."/>
            <person name="Barry K."/>
            <person name="Detter J.C."/>
            <person name="Glavina del Rio T."/>
            <person name="Hammon N."/>
            <person name="Israni S."/>
            <person name="Dalin E."/>
            <person name="Tice H."/>
            <person name="Pitluck S."/>
            <person name="Di Bartolo G."/>
            <person name="Chain P."/>
            <person name="Malfatti S."/>
            <person name="Shin M."/>
            <person name="Vergez L."/>
            <person name="Schmutz J."/>
            <person name="Larimer F."/>
            <person name="Land M."/>
            <person name="Hauser L."/>
            <person name="Worsham P."/>
            <person name="Chu M."/>
            <person name="Bearden S."/>
            <person name="Garcia E."/>
            <person name="Richardson P."/>
        </authorList>
    </citation>
    <scope>NUCLEOTIDE SEQUENCE [LARGE SCALE GENOMIC DNA]</scope>
    <source>
        <strain>Pestoides F</strain>
    </source>
</reference>
<evidence type="ECO:0000255" key="1">
    <source>
        <dbReference type="HAMAP-Rule" id="MF_01597"/>
    </source>
</evidence>
<protein>
    <recommendedName>
        <fullName evidence="1">Spermidine export protein MdtI</fullName>
    </recommendedName>
</protein>
<sequence>MQQLEFYPIAFLILAVMLEIVANILLKMSDGFRRKWLGILSLLSVLGAFSALAQAVKGIELSVAYALWGGFGIAATVAAGWILFNQRLNYKGWIGLILLLAGMVMIKLS</sequence>
<dbReference type="EMBL" id="CP000668">
    <property type="protein sequence ID" value="ABP39451.1"/>
    <property type="molecule type" value="Genomic_DNA"/>
</dbReference>
<dbReference type="RefSeq" id="WP_002211187.1">
    <property type="nucleotide sequence ID" value="NZ_CP009715.1"/>
</dbReference>
<dbReference type="SMR" id="A4TJI9"/>
<dbReference type="GeneID" id="57976592"/>
<dbReference type="KEGG" id="ypp:YPDSF_1053"/>
<dbReference type="PATRIC" id="fig|386656.14.peg.2781"/>
<dbReference type="GO" id="GO:0005886">
    <property type="term" value="C:plasma membrane"/>
    <property type="evidence" value="ECO:0007669"/>
    <property type="project" value="UniProtKB-SubCell"/>
</dbReference>
<dbReference type="GO" id="GO:0015199">
    <property type="term" value="F:amino-acid betaine transmembrane transporter activity"/>
    <property type="evidence" value="ECO:0007669"/>
    <property type="project" value="TreeGrafter"/>
</dbReference>
<dbReference type="GO" id="GO:0015297">
    <property type="term" value="F:antiporter activity"/>
    <property type="evidence" value="ECO:0007669"/>
    <property type="project" value="TreeGrafter"/>
</dbReference>
<dbReference type="GO" id="GO:0015220">
    <property type="term" value="F:choline transmembrane transporter activity"/>
    <property type="evidence" value="ECO:0007669"/>
    <property type="project" value="TreeGrafter"/>
</dbReference>
<dbReference type="GO" id="GO:0015606">
    <property type="term" value="F:spermidine transmembrane transporter activity"/>
    <property type="evidence" value="ECO:0007669"/>
    <property type="project" value="UniProtKB-UniRule"/>
</dbReference>
<dbReference type="GO" id="GO:0031460">
    <property type="term" value="P:glycine betaine transport"/>
    <property type="evidence" value="ECO:0007669"/>
    <property type="project" value="TreeGrafter"/>
</dbReference>
<dbReference type="FunFam" id="1.10.3730.20:FF:000001">
    <property type="entry name" value="Quaternary ammonium compound resistance transporter SugE"/>
    <property type="match status" value="1"/>
</dbReference>
<dbReference type="Gene3D" id="1.10.3730.20">
    <property type="match status" value="1"/>
</dbReference>
<dbReference type="HAMAP" id="MF_01597">
    <property type="entry name" value="MdtI"/>
    <property type="match status" value="1"/>
</dbReference>
<dbReference type="InterPro" id="IPR000390">
    <property type="entry name" value="Small_drug/metabolite_transptr"/>
</dbReference>
<dbReference type="InterPro" id="IPR045324">
    <property type="entry name" value="Small_multidrug_res"/>
</dbReference>
<dbReference type="InterPro" id="IPR023737">
    <property type="entry name" value="Spermidine_export_MdtI"/>
</dbReference>
<dbReference type="NCBIfam" id="NF007934">
    <property type="entry name" value="PRK10650.1"/>
    <property type="match status" value="1"/>
</dbReference>
<dbReference type="PANTHER" id="PTHR30561">
    <property type="entry name" value="SMR FAMILY PROTON-DEPENDENT DRUG EFFLUX TRANSPORTER SUGE"/>
    <property type="match status" value="1"/>
</dbReference>
<dbReference type="PANTHER" id="PTHR30561:SF6">
    <property type="entry name" value="SPERMIDINE EXPORT PROTEIN MDTI"/>
    <property type="match status" value="1"/>
</dbReference>
<dbReference type="Pfam" id="PF00893">
    <property type="entry name" value="Multi_Drug_Res"/>
    <property type="match status" value="1"/>
</dbReference>
<dbReference type="SUPFAM" id="SSF103481">
    <property type="entry name" value="Multidrug resistance efflux transporter EmrE"/>
    <property type="match status" value="1"/>
</dbReference>
<gene>
    <name evidence="1" type="primary">mdtI</name>
    <name type="ordered locus">YPDSF_1053</name>
</gene>
<feature type="chain" id="PRO_0000331160" description="Spermidine export protein MdtI">
    <location>
        <begin position="1"/>
        <end position="109"/>
    </location>
</feature>
<feature type="transmembrane region" description="Helical" evidence="1">
    <location>
        <begin position="6"/>
        <end position="26"/>
    </location>
</feature>
<feature type="transmembrane region" description="Helical" evidence="1">
    <location>
        <begin position="36"/>
        <end position="56"/>
    </location>
</feature>
<feature type="transmembrane region" description="Helical" evidence="1">
    <location>
        <begin position="64"/>
        <end position="84"/>
    </location>
</feature>
<feature type="transmembrane region" description="Helical" evidence="1">
    <location>
        <begin position="88"/>
        <end position="108"/>
    </location>
</feature>
<proteinExistence type="inferred from homology"/>
<name>MDTI_YERPP</name>
<accession>A4TJI9</accession>
<comment type="function">
    <text evidence="1">Catalyzes the excretion of spermidine.</text>
</comment>
<comment type="subunit">
    <text evidence="1">Forms a complex with MdtJ.</text>
</comment>
<comment type="subcellular location">
    <subcellularLocation>
        <location evidence="1">Cell inner membrane</location>
        <topology evidence="1">Multi-pass membrane protein</topology>
    </subcellularLocation>
</comment>
<comment type="similarity">
    <text evidence="1">Belongs to the drug/metabolite transporter (DMT) superfamily. Small multidrug resistance (SMR) (TC 2.A.7.1) family. MdtI subfamily.</text>
</comment>
<organism>
    <name type="scientific">Yersinia pestis (strain Pestoides F)</name>
    <dbReference type="NCBI Taxonomy" id="386656"/>
    <lineage>
        <taxon>Bacteria</taxon>
        <taxon>Pseudomonadati</taxon>
        <taxon>Pseudomonadota</taxon>
        <taxon>Gammaproteobacteria</taxon>
        <taxon>Enterobacterales</taxon>
        <taxon>Yersiniaceae</taxon>
        <taxon>Yersinia</taxon>
    </lineage>
</organism>